<name>PFKB_THETC</name>
<comment type="function">
    <text evidence="2">Catalyzes the ATP-dependent phosphorylation of D-fructose 6-phosphate to fructose 1,6-bisphosphate. Together with the adjacently encoded sucrose 6'-phosphate phosphorylase, may be involved in a new pathway for the degradation of sucrose. Cannot phosphorylate D-fructose.</text>
</comment>
<comment type="catalytic activity">
    <reaction evidence="2">
        <text>beta-D-fructose 6-phosphate + ATP = beta-D-fructose 1,6-bisphosphate + ADP + H(+)</text>
        <dbReference type="Rhea" id="RHEA:16109"/>
        <dbReference type="ChEBI" id="CHEBI:15378"/>
        <dbReference type="ChEBI" id="CHEBI:30616"/>
        <dbReference type="ChEBI" id="CHEBI:32966"/>
        <dbReference type="ChEBI" id="CHEBI:57634"/>
        <dbReference type="ChEBI" id="CHEBI:456216"/>
        <dbReference type="EC" id="2.7.1.11"/>
    </reaction>
</comment>
<comment type="similarity">
    <text evidence="4">Belongs to the carbohydrate kinase PfkB family.</text>
</comment>
<organism>
    <name type="scientific">Thermoanaerobacterium thermosaccharolyticum (strain ATCC 7956 / DSM 571 / NCIMB 9385 / NCA 3814 / NCTC 13789 / WDCM 00135 / 2032)</name>
    <name type="common">Clostridium thermosaccharolyticum</name>
    <dbReference type="NCBI Taxonomy" id="580327"/>
    <lineage>
        <taxon>Bacteria</taxon>
        <taxon>Bacillati</taxon>
        <taxon>Bacillota</taxon>
        <taxon>Clostridia</taxon>
        <taxon>Thermoanaerobacterales</taxon>
        <taxon>Thermoanaerobacteraceae</taxon>
        <taxon>Thermoanaerobacterium</taxon>
    </lineage>
</organism>
<accession>D9TT10</accession>
<dbReference type="EC" id="2.7.1.11" evidence="2"/>
<dbReference type="EMBL" id="CP002171">
    <property type="protein sequence ID" value="ADL69408.1"/>
    <property type="molecule type" value="Genomic_DNA"/>
</dbReference>
<dbReference type="RefSeq" id="WP_013298374.1">
    <property type="nucleotide sequence ID" value="NC_014410.1"/>
</dbReference>
<dbReference type="SMR" id="D9TT10"/>
<dbReference type="STRING" id="580327.Tthe_1922"/>
<dbReference type="GeneID" id="93864742"/>
<dbReference type="KEGG" id="ttm:Tthe_1922"/>
<dbReference type="eggNOG" id="COG0524">
    <property type="taxonomic scope" value="Bacteria"/>
</dbReference>
<dbReference type="HOGENOM" id="CLU_027634_6_0_9"/>
<dbReference type="OrthoDB" id="9788681at2"/>
<dbReference type="Proteomes" id="UP000001626">
    <property type="component" value="Chromosome"/>
</dbReference>
<dbReference type="GO" id="GO:0003872">
    <property type="term" value="F:6-phosphofructokinase activity"/>
    <property type="evidence" value="ECO:0007669"/>
    <property type="project" value="UniProtKB-EC"/>
</dbReference>
<dbReference type="GO" id="GO:0005524">
    <property type="term" value="F:ATP binding"/>
    <property type="evidence" value="ECO:0007669"/>
    <property type="project" value="UniProtKB-KW"/>
</dbReference>
<dbReference type="GO" id="GO:0008865">
    <property type="term" value="F:fructokinase activity"/>
    <property type="evidence" value="ECO:0007669"/>
    <property type="project" value="UniProtKB-ARBA"/>
</dbReference>
<dbReference type="GO" id="GO:0006000">
    <property type="term" value="P:fructose metabolic process"/>
    <property type="evidence" value="ECO:0007669"/>
    <property type="project" value="UniProtKB-ARBA"/>
</dbReference>
<dbReference type="CDD" id="cd01167">
    <property type="entry name" value="bac_FRK"/>
    <property type="match status" value="1"/>
</dbReference>
<dbReference type="Gene3D" id="3.40.1190.30">
    <property type="match status" value="1"/>
</dbReference>
<dbReference type="Gene3D" id="3.40.1620.20">
    <property type="match status" value="1"/>
</dbReference>
<dbReference type="Gene3D" id="6.10.140.490">
    <property type="match status" value="1"/>
</dbReference>
<dbReference type="InterPro" id="IPR002173">
    <property type="entry name" value="Carboh/pur_kinase_PfkB_CS"/>
</dbReference>
<dbReference type="InterPro" id="IPR050306">
    <property type="entry name" value="PfkB_Carbo_kinase"/>
</dbReference>
<dbReference type="InterPro" id="IPR011611">
    <property type="entry name" value="PfkB_dom"/>
</dbReference>
<dbReference type="InterPro" id="IPR002139">
    <property type="entry name" value="Ribo/fructo_kinase"/>
</dbReference>
<dbReference type="InterPro" id="IPR029056">
    <property type="entry name" value="Ribokinase-like"/>
</dbReference>
<dbReference type="PANTHER" id="PTHR43085:SF57">
    <property type="entry name" value="CARBOHYDRATE KINASE PFKB DOMAIN-CONTAINING PROTEIN"/>
    <property type="match status" value="1"/>
</dbReference>
<dbReference type="PANTHER" id="PTHR43085">
    <property type="entry name" value="HEXOKINASE FAMILY MEMBER"/>
    <property type="match status" value="1"/>
</dbReference>
<dbReference type="Pfam" id="PF00294">
    <property type="entry name" value="PfkB"/>
    <property type="match status" value="1"/>
</dbReference>
<dbReference type="PRINTS" id="PR00990">
    <property type="entry name" value="RIBOKINASE"/>
</dbReference>
<dbReference type="SUPFAM" id="SSF53613">
    <property type="entry name" value="Ribokinase-like"/>
    <property type="match status" value="1"/>
</dbReference>
<dbReference type="PROSITE" id="PS00583">
    <property type="entry name" value="PFKB_KINASES_1"/>
    <property type="match status" value="1"/>
</dbReference>
<gene>
    <name type="primary">pfkB</name>
    <name evidence="6" type="ordered locus">Tthe_1922</name>
</gene>
<protein>
    <recommendedName>
        <fullName evidence="5">ATP-dependent 6-phosphofructokinase</fullName>
        <shortName evidence="5">ATP-PFK</shortName>
        <shortName evidence="3">Phosphofructokinase</shortName>
        <ecNumber evidence="2">2.7.1.11</ecNumber>
    </recommendedName>
</protein>
<keyword id="KW-0067">ATP-binding</keyword>
<keyword id="KW-0119">Carbohydrate metabolism</keyword>
<keyword id="KW-0418">Kinase</keyword>
<keyword id="KW-0547">Nucleotide-binding</keyword>
<keyword id="KW-1185">Reference proteome</keyword>
<keyword id="KW-0808">Transferase</keyword>
<sequence>MFNFNDKIVFDDKKYDVLTVGEMLVDMISTDYGDDFECDTYKKYFGGSPANIAINSKMLGINSIIVSSVGNDGLGKFLLKKLQEHHIEIKYVRQVDYSTSMVLVTKSKSSPTPIFYRDADYHIEYSDELKYLIENTKIVHFSSWPISRNPSRSTVEILIDECKKYDVLVCYDPNYHSMIWERGHDGREYIKSLIAKVDIIKPSEDDAERIFGKDTPENQLKKFLDLGAKLVILTLGKDGAIVSNGEETIRFNTLADEVVDTTGAGDAFWSGFYSGLIKGYTLKKSLELGFAVSAYKLRYVGAIVDLPDIDTIKSMYDLKKLR</sequence>
<evidence type="ECO:0000250" key="1">
    <source>
        <dbReference type="UniProtKB" id="O59128"/>
    </source>
</evidence>
<evidence type="ECO:0000269" key="2">
    <source>
    </source>
</evidence>
<evidence type="ECO:0000303" key="3">
    <source>
    </source>
</evidence>
<evidence type="ECO:0000305" key="4"/>
<evidence type="ECO:0000305" key="5">
    <source>
    </source>
</evidence>
<evidence type="ECO:0000312" key="6">
    <source>
        <dbReference type="EMBL" id="ADL69408.1"/>
    </source>
</evidence>
<reference key="1">
    <citation type="submission" date="2010-08" db="EMBL/GenBank/DDBJ databases">
        <title>Complete sequence of Thermoanaerobacterium thermosaccharolyticum DSM 571.</title>
        <authorList>
            <consortium name="US DOE Joint Genome Institute"/>
            <person name="Lucas S."/>
            <person name="Copeland A."/>
            <person name="Lapidus A."/>
            <person name="Cheng J.-F."/>
            <person name="Bruce D."/>
            <person name="Goodwin L."/>
            <person name="Pitluck S."/>
            <person name="Teshima H."/>
            <person name="Detter J.C."/>
            <person name="Han C."/>
            <person name="Tapia R."/>
            <person name="Land M."/>
            <person name="Hauser L."/>
            <person name="Chang Y.-J."/>
            <person name="Jeffries C."/>
            <person name="Kyrpides N."/>
            <person name="Ivanova N."/>
            <person name="Mikhailova N."/>
            <person name="Hemme C.L."/>
            <person name="Woyke T."/>
        </authorList>
    </citation>
    <scope>NUCLEOTIDE SEQUENCE [LARGE SCALE GENOMIC DNA]</scope>
    <source>
        <strain>ATCC 7956 / DSM 571 / NCIMB 9385 / NCA 3814 / NCTC 13789 / WDCM 00135 / 2032</strain>
    </source>
</reference>
<reference key="2">
    <citation type="journal article" date="2014" name="Appl. Microbiol. Biotechnol.">
        <title>The quest for a thermostable sucrose phosphorylase reveals sucrose 6'-phosphate phosphorylase as a novel specificity.</title>
        <authorList>
            <person name="Verhaeghe T."/>
            <person name="Aerts D."/>
            <person name="Diricks M."/>
            <person name="Soetaert W."/>
            <person name="Desmet T."/>
        </authorList>
    </citation>
    <scope>FUNCTION</scope>
    <scope>CATALYTIC ACTIVITY</scope>
    <scope>SUBSTRATE SPECIFICITY</scope>
</reference>
<proteinExistence type="evidence at protein level"/>
<feature type="chain" id="PRO_0000442436" description="ATP-dependent 6-phosphofructokinase">
    <location>
        <begin position="1"/>
        <end position="322"/>
    </location>
</feature>
<feature type="binding site" evidence="1">
    <location>
        <position position="201"/>
    </location>
    <ligand>
        <name>ATP</name>
        <dbReference type="ChEBI" id="CHEBI:30616"/>
    </ligand>
</feature>
<feature type="binding site" evidence="1">
    <location>
        <position position="234"/>
    </location>
    <ligand>
        <name>ATP</name>
        <dbReference type="ChEBI" id="CHEBI:30616"/>
    </ligand>
</feature>
<feature type="binding site" evidence="1">
    <location>
        <position position="239"/>
    </location>
    <ligand>
        <name>ATP</name>
        <dbReference type="ChEBI" id="CHEBI:30616"/>
    </ligand>
</feature>